<protein>
    <recommendedName>
        <fullName evidence="1">Ribosomal RNA small subunit methyltransferase G</fullName>
        <ecNumber evidence="1">2.1.1.170</ecNumber>
    </recommendedName>
    <alternativeName>
        <fullName evidence="1">16S rRNA 7-methylguanosine methyltransferase</fullName>
        <shortName evidence="1">16S rRNA m7G methyltransferase</shortName>
    </alternativeName>
</protein>
<feature type="chain" id="PRO_1000092624" description="Ribosomal RNA small subunit methyltransferase G">
    <location>
        <begin position="1"/>
        <end position="204"/>
    </location>
</feature>
<feature type="binding site" evidence="1">
    <location>
        <position position="73"/>
    </location>
    <ligand>
        <name>S-adenosyl-L-methionine</name>
        <dbReference type="ChEBI" id="CHEBI:59789"/>
    </ligand>
</feature>
<feature type="binding site" evidence="1">
    <location>
        <position position="78"/>
    </location>
    <ligand>
        <name>S-adenosyl-L-methionine</name>
        <dbReference type="ChEBI" id="CHEBI:59789"/>
    </ligand>
</feature>
<feature type="binding site" evidence="1">
    <location>
        <position position="139"/>
    </location>
    <ligand>
        <name>S-adenosyl-L-methionine</name>
        <dbReference type="ChEBI" id="CHEBI:59789"/>
    </ligand>
</feature>
<reference key="1">
    <citation type="journal article" date="2009" name="Infect. Immun.">
        <title>Comparative genomics reveal extensive transposon-mediated genomic plasticity and diversity among potential effector proteins within the genus Coxiella.</title>
        <authorList>
            <person name="Beare P.A."/>
            <person name="Unsworth N."/>
            <person name="Andoh M."/>
            <person name="Voth D.E."/>
            <person name="Omsland A."/>
            <person name="Gilk S.D."/>
            <person name="Williams K.P."/>
            <person name="Sobral B.W."/>
            <person name="Kupko J.J. III"/>
            <person name="Porcella S.F."/>
            <person name="Samuel J.E."/>
            <person name="Heinzen R.A."/>
        </authorList>
    </citation>
    <scope>NUCLEOTIDE SEQUENCE [LARGE SCALE GENOMIC DNA]</scope>
    <source>
        <strain>CbuG_Q212</strain>
    </source>
</reference>
<proteinExistence type="inferred from homology"/>
<keyword id="KW-0963">Cytoplasm</keyword>
<keyword id="KW-0489">Methyltransferase</keyword>
<keyword id="KW-0698">rRNA processing</keyword>
<keyword id="KW-0949">S-adenosyl-L-methionine</keyword>
<keyword id="KW-0808">Transferase</keyword>
<gene>
    <name evidence="1" type="primary">rsmG</name>
    <name type="ordered locus">CbuG_0034</name>
</gene>
<accession>B6J2B9</accession>
<dbReference type="EC" id="2.1.1.170" evidence="1"/>
<dbReference type="EMBL" id="CP001019">
    <property type="protein sequence ID" value="ACJ17493.1"/>
    <property type="molecule type" value="Genomic_DNA"/>
</dbReference>
<dbReference type="RefSeq" id="WP_012569550.1">
    <property type="nucleotide sequence ID" value="NC_011527.1"/>
</dbReference>
<dbReference type="SMR" id="B6J2B9"/>
<dbReference type="KEGG" id="cbg:CbuG_0034"/>
<dbReference type="HOGENOM" id="CLU_065341_2_0_6"/>
<dbReference type="GO" id="GO:0005829">
    <property type="term" value="C:cytosol"/>
    <property type="evidence" value="ECO:0007669"/>
    <property type="project" value="TreeGrafter"/>
</dbReference>
<dbReference type="GO" id="GO:0070043">
    <property type="term" value="F:rRNA (guanine-N7-)-methyltransferase activity"/>
    <property type="evidence" value="ECO:0007669"/>
    <property type="project" value="UniProtKB-UniRule"/>
</dbReference>
<dbReference type="CDD" id="cd02440">
    <property type="entry name" value="AdoMet_MTases"/>
    <property type="match status" value="1"/>
</dbReference>
<dbReference type="FunFam" id="3.40.50.150:FF:000682">
    <property type="entry name" value="Ribosomal RNA small subunit methyltransferase G"/>
    <property type="match status" value="1"/>
</dbReference>
<dbReference type="Gene3D" id="3.40.50.150">
    <property type="entry name" value="Vaccinia Virus protein VP39"/>
    <property type="match status" value="1"/>
</dbReference>
<dbReference type="HAMAP" id="MF_00074">
    <property type="entry name" value="16SrRNA_methyltr_G"/>
    <property type="match status" value="1"/>
</dbReference>
<dbReference type="InterPro" id="IPR003682">
    <property type="entry name" value="rRNA_ssu_MeTfrase_G"/>
</dbReference>
<dbReference type="InterPro" id="IPR029063">
    <property type="entry name" value="SAM-dependent_MTases_sf"/>
</dbReference>
<dbReference type="NCBIfam" id="TIGR00138">
    <property type="entry name" value="rsmG_gidB"/>
    <property type="match status" value="1"/>
</dbReference>
<dbReference type="PANTHER" id="PTHR31760">
    <property type="entry name" value="S-ADENOSYL-L-METHIONINE-DEPENDENT METHYLTRANSFERASES SUPERFAMILY PROTEIN"/>
    <property type="match status" value="1"/>
</dbReference>
<dbReference type="PANTHER" id="PTHR31760:SF0">
    <property type="entry name" value="S-ADENOSYL-L-METHIONINE-DEPENDENT METHYLTRANSFERASES SUPERFAMILY PROTEIN"/>
    <property type="match status" value="1"/>
</dbReference>
<dbReference type="Pfam" id="PF02527">
    <property type="entry name" value="GidB"/>
    <property type="match status" value="1"/>
</dbReference>
<dbReference type="PIRSF" id="PIRSF003078">
    <property type="entry name" value="GidB"/>
    <property type="match status" value="1"/>
</dbReference>
<dbReference type="SUPFAM" id="SSF53335">
    <property type="entry name" value="S-adenosyl-L-methionine-dependent methyltransferases"/>
    <property type="match status" value="1"/>
</dbReference>
<evidence type="ECO:0000255" key="1">
    <source>
        <dbReference type="HAMAP-Rule" id="MF_00074"/>
    </source>
</evidence>
<name>RSMG_COXB2</name>
<organism>
    <name type="scientific">Coxiella burnetii (strain CbuG_Q212)</name>
    <name type="common">Coxiella burnetii (strain Q212)</name>
    <dbReference type="NCBI Taxonomy" id="434923"/>
    <lineage>
        <taxon>Bacteria</taxon>
        <taxon>Pseudomonadati</taxon>
        <taxon>Pseudomonadota</taxon>
        <taxon>Gammaproteobacteria</taxon>
        <taxon>Legionellales</taxon>
        <taxon>Coxiellaceae</taxon>
        <taxon>Coxiella</taxon>
    </lineage>
</organism>
<comment type="function">
    <text evidence="1">Specifically methylates the N7 position of guanine in position 527 of 16S rRNA.</text>
</comment>
<comment type="catalytic activity">
    <reaction evidence="1">
        <text>guanosine(527) in 16S rRNA + S-adenosyl-L-methionine = N(7)-methylguanosine(527) in 16S rRNA + S-adenosyl-L-homocysteine</text>
        <dbReference type="Rhea" id="RHEA:42732"/>
        <dbReference type="Rhea" id="RHEA-COMP:10209"/>
        <dbReference type="Rhea" id="RHEA-COMP:10210"/>
        <dbReference type="ChEBI" id="CHEBI:57856"/>
        <dbReference type="ChEBI" id="CHEBI:59789"/>
        <dbReference type="ChEBI" id="CHEBI:74269"/>
        <dbReference type="ChEBI" id="CHEBI:74480"/>
        <dbReference type="EC" id="2.1.1.170"/>
    </reaction>
</comment>
<comment type="subcellular location">
    <subcellularLocation>
        <location evidence="1">Cytoplasm</location>
    </subcellularLocation>
</comment>
<comment type="similarity">
    <text evidence="1">Belongs to the methyltransferase superfamily. RNA methyltransferase RsmG family.</text>
</comment>
<sequence>MTEKLKQGIDQLGLKVAETIQQSMLAFLAFLQKWNQAYNLTAITEIKSMITHHLLDSLSILPYLKGDKILDVGSGAGFPGIPLAFACPEKKFTLIDSKAKKTAFLLQAASRFKITNVTIIQERVGSYQPGFYFDTITCRALGSVREIMEQTNHLLRSGGQWLIMKGTYPEKELRGTDASAIVHVLNVPGLKAERHLVEVKNNKG</sequence>